<comment type="function">
    <text evidence="1">Involved in mRNA degradation. Catalyzes the phosphorolysis of single-stranded polyribonucleotides processively in the 3'- to 5'-direction.</text>
</comment>
<comment type="catalytic activity">
    <reaction evidence="1">
        <text>RNA(n+1) + phosphate = RNA(n) + a ribonucleoside 5'-diphosphate</text>
        <dbReference type="Rhea" id="RHEA:22096"/>
        <dbReference type="Rhea" id="RHEA-COMP:14527"/>
        <dbReference type="Rhea" id="RHEA-COMP:17342"/>
        <dbReference type="ChEBI" id="CHEBI:43474"/>
        <dbReference type="ChEBI" id="CHEBI:57930"/>
        <dbReference type="ChEBI" id="CHEBI:140395"/>
        <dbReference type="EC" id="2.7.7.8"/>
    </reaction>
</comment>
<comment type="cofactor">
    <cofactor evidence="1">
        <name>Mg(2+)</name>
        <dbReference type="ChEBI" id="CHEBI:18420"/>
    </cofactor>
</comment>
<comment type="subunit">
    <text evidence="1">Component of the RNA degradosome, which is a multiprotein complex involved in RNA processing and mRNA degradation.</text>
</comment>
<comment type="subcellular location">
    <subcellularLocation>
        <location evidence="1">Cytoplasm</location>
    </subcellularLocation>
</comment>
<comment type="similarity">
    <text evidence="1">Belongs to the polyribonucleotide nucleotidyltransferase family.</text>
</comment>
<comment type="sequence caution" evidence="3">
    <conflict type="erroneous initiation">
        <sequence resource="EMBL-CDS" id="AAX67129"/>
    </conflict>
</comment>
<evidence type="ECO:0000255" key="1">
    <source>
        <dbReference type="HAMAP-Rule" id="MF_01595"/>
    </source>
</evidence>
<evidence type="ECO:0000256" key="2">
    <source>
        <dbReference type="SAM" id="MobiDB-lite"/>
    </source>
</evidence>
<evidence type="ECO:0000305" key="3"/>
<proteinExistence type="inferred from homology"/>
<accession>Q57JI3</accession>
<sequence length="711" mass="77039">MLNPIVRKFQYGQHTVTLETGMMARQATAAVMVSMDDTAVFVTVVGQKKAKPGQDFFPLTVNYQERTYAAGRIPGSFFRREGRPSEGETLIARLIDRPVRPLFPEGFVNEVQVIATVVSVNPQVNPDIVAMIGASAALSLSGIPFNGPIGAARVGYINDQYVLNPTQDELKESKLDLVVAGTEAAVLMVESEAELLSEDTMLGAVVFGHEQQQVVIQAINDLVKEAGKPRWDWQPEAVNDALNARVAALAESRLSDAYRITDKQERYAQVDVIKSETIEQLIAEDETLDANELGEILHAIEKNVVRSRVLAGEPRIDGREKDMIRGLDVRTGVLPRTHGSALFTRGETQALVTATLGTARDAQVLDELMGERTDSFLFHYNFPPYSVGETGMVGSPKRREIGHGRLAKRGVLAVMPDMDKFPYTVRVVSEITESNGSSSMASVCGASLALMDAGVPIKAAVAGIAMGLVKEGDNYVVLSDILGDEDHLGDMDFKVAGSRDGISALQMDIKIEGITKEIMQVALNQAKGARLHILGVMEQAINAPRGDISEFAPRIHTIKISTDKIKDVIGKGGSVIRALTEETGTTIEIEDDGTVKIAATDGEKAKYAIRRIEEITAEIEVGRIYNGKVTRIVDFGAFVAIGGGKEGLVHISQIADKRVEKVTDYLQMGQEVPVKVLEVDRQGRVRLSIKEATEQSQPAAAPEAPASEQAE</sequence>
<protein>
    <recommendedName>
        <fullName evidence="1">Polyribonucleotide nucleotidyltransferase</fullName>
        <ecNumber evidence="1">2.7.7.8</ecNumber>
    </recommendedName>
    <alternativeName>
        <fullName evidence="1">Polynucleotide phosphorylase</fullName>
        <shortName evidence="1">PNPase</shortName>
    </alternativeName>
</protein>
<dbReference type="EC" id="2.7.7.8" evidence="1"/>
<dbReference type="EMBL" id="AE017220">
    <property type="protein sequence ID" value="AAX67129.1"/>
    <property type="status" value="ALT_INIT"/>
    <property type="molecule type" value="Genomic_DNA"/>
</dbReference>
<dbReference type="RefSeq" id="WP_001670767.1">
    <property type="nucleotide sequence ID" value="NC_006905.1"/>
</dbReference>
<dbReference type="SMR" id="Q57JI3"/>
<dbReference type="KEGG" id="sec:SCH_3223"/>
<dbReference type="HOGENOM" id="CLU_004217_2_2_6"/>
<dbReference type="Proteomes" id="UP000000538">
    <property type="component" value="Chromosome"/>
</dbReference>
<dbReference type="GO" id="GO:0005829">
    <property type="term" value="C:cytosol"/>
    <property type="evidence" value="ECO:0007669"/>
    <property type="project" value="TreeGrafter"/>
</dbReference>
<dbReference type="GO" id="GO:0000175">
    <property type="term" value="F:3'-5'-RNA exonuclease activity"/>
    <property type="evidence" value="ECO:0007669"/>
    <property type="project" value="TreeGrafter"/>
</dbReference>
<dbReference type="GO" id="GO:0000287">
    <property type="term" value="F:magnesium ion binding"/>
    <property type="evidence" value="ECO:0007669"/>
    <property type="project" value="UniProtKB-UniRule"/>
</dbReference>
<dbReference type="GO" id="GO:0004654">
    <property type="term" value="F:polyribonucleotide nucleotidyltransferase activity"/>
    <property type="evidence" value="ECO:0007669"/>
    <property type="project" value="UniProtKB-UniRule"/>
</dbReference>
<dbReference type="GO" id="GO:0003723">
    <property type="term" value="F:RNA binding"/>
    <property type="evidence" value="ECO:0007669"/>
    <property type="project" value="UniProtKB-UniRule"/>
</dbReference>
<dbReference type="GO" id="GO:0006402">
    <property type="term" value="P:mRNA catabolic process"/>
    <property type="evidence" value="ECO:0007669"/>
    <property type="project" value="UniProtKB-UniRule"/>
</dbReference>
<dbReference type="GO" id="GO:0006396">
    <property type="term" value="P:RNA processing"/>
    <property type="evidence" value="ECO:0007669"/>
    <property type="project" value="InterPro"/>
</dbReference>
<dbReference type="CDD" id="cd02393">
    <property type="entry name" value="KH-I_PNPase"/>
    <property type="match status" value="1"/>
</dbReference>
<dbReference type="CDD" id="cd11363">
    <property type="entry name" value="RNase_PH_PNPase_1"/>
    <property type="match status" value="1"/>
</dbReference>
<dbReference type="CDD" id="cd11364">
    <property type="entry name" value="RNase_PH_PNPase_2"/>
    <property type="match status" value="1"/>
</dbReference>
<dbReference type="CDD" id="cd04472">
    <property type="entry name" value="S1_PNPase"/>
    <property type="match status" value="1"/>
</dbReference>
<dbReference type="FunFam" id="2.40.50.140:FF:000023">
    <property type="entry name" value="Polyribonucleotide nucleotidyltransferase"/>
    <property type="match status" value="1"/>
</dbReference>
<dbReference type="FunFam" id="3.30.1370.10:FF:000001">
    <property type="entry name" value="Polyribonucleotide nucleotidyltransferase"/>
    <property type="match status" value="1"/>
</dbReference>
<dbReference type="FunFam" id="3.30.230.70:FF:000001">
    <property type="entry name" value="Polyribonucleotide nucleotidyltransferase"/>
    <property type="match status" value="1"/>
</dbReference>
<dbReference type="FunFam" id="3.30.230.70:FF:000002">
    <property type="entry name" value="Polyribonucleotide nucleotidyltransferase"/>
    <property type="match status" value="1"/>
</dbReference>
<dbReference type="Gene3D" id="3.30.230.70">
    <property type="entry name" value="GHMP Kinase, N-terminal domain"/>
    <property type="match status" value="2"/>
</dbReference>
<dbReference type="Gene3D" id="3.30.1370.10">
    <property type="entry name" value="K Homology domain, type 1"/>
    <property type="match status" value="1"/>
</dbReference>
<dbReference type="Gene3D" id="2.40.50.140">
    <property type="entry name" value="Nucleic acid-binding proteins"/>
    <property type="match status" value="1"/>
</dbReference>
<dbReference type="HAMAP" id="MF_01595">
    <property type="entry name" value="PNPase"/>
    <property type="match status" value="1"/>
</dbReference>
<dbReference type="InterPro" id="IPR001247">
    <property type="entry name" value="ExoRNase_PH_dom1"/>
</dbReference>
<dbReference type="InterPro" id="IPR015847">
    <property type="entry name" value="ExoRNase_PH_dom2"/>
</dbReference>
<dbReference type="InterPro" id="IPR036345">
    <property type="entry name" value="ExoRNase_PH_dom2_sf"/>
</dbReference>
<dbReference type="InterPro" id="IPR004087">
    <property type="entry name" value="KH_dom"/>
</dbReference>
<dbReference type="InterPro" id="IPR004088">
    <property type="entry name" value="KH_dom_type_1"/>
</dbReference>
<dbReference type="InterPro" id="IPR036612">
    <property type="entry name" value="KH_dom_type_1_sf"/>
</dbReference>
<dbReference type="InterPro" id="IPR012340">
    <property type="entry name" value="NA-bd_OB-fold"/>
</dbReference>
<dbReference type="InterPro" id="IPR012162">
    <property type="entry name" value="PNPase"/>
</dbReference>
<dbReference type="InterPro" id="IPR027408">
    <property type="entry name" value="PNPase/RNase_PH_dom_sf"/>
</dbReference>
<dbReference type="InterPro" id="IPR015848">
    <property type="entry name" value="PNPase_PH_RNA-bd_bac/org-type"/>
</dbReference>
<dbReference type="InterPro" id="IPR036456">
    <property type="entry name" value="PNPase_PH_RNA-bd_sf"/>
</dbReference>
<dbReference type="InterPro" id="IPR020568">
    <property type="entry name" value="Ribosomal_Su5_D2-typ_SF"/>
</dbReference>
<dbReference type="InterPro" id="IPR003029">
    <property type="entry name" value="S1_domain"/>
</dbReference>
<dbReference type="NCBIfam" id="TIGR03591">
    <property type="entry name" value="polynuc_phos"/>
    <property type="match status" value="1"/>
</dbReference>
<dbReference type="NCBIfam" id="NF008805">
    <property type="entry name" value="PRK11824.1"/>
    <property type="match status" value="1"/>
</dbReference>
<dbReference type="PANTHER" id="PTHR11252">
    <property type="entry name" value="POLYRIBONUCLEOTIDE NUCLEOTIDYLTRANSFERASE"/>
    <property type="match status" value="1"/>
</dbReference>
<dbReference type="PANTHER" id="PTHR11252:SF0">
    <property type="entry name" value="POLYRIBONUCLEOTIDE NUCLEOTIDYLTRANSFERASE 1, MITOCHONDRIAL"/>
    <property type="match status" value="1"/>
</dbReference>
<dbReference type="Pfam" id="PF00013">
    <property type="entry name" value="KH_1"/>
    <property type="match status" value="1"/>
</dbReference>
<dbReference type="Pfam" id="PF03726">
    <property type="entry name" value="PNPase"/>
    <property type="match status" value="1"/>
</dbReference>
<dbReference type="Pfam" id="PF01138">
    <property type="entry name" value="RNase_PH"/>
    <property type="match status" value="2"/>
</dbReference>
<dbReference type="Pfam" id="PF03725">
    <property type="entry name" value="RNase_PH_C"/>
    <property type="match status" value="2"/>
</dbReference>
<dbReference type="Pfam" id="PF00575">
    <property type="entry name" value="S1"/>
    <property type="match status" value="1"/>
</dbReference>
<dbReference type="PIRSF" id="PIRSF005499">
    <property type="entry name" value="PNPase"/>
    <property type="match status" value="1"/>
</dbReference>
<dbReference type="SMART" id="SM00322">
    <property type="entry name" value="KH"/>
    <property type="match status" value="1"/>
</dbReference>
<dbReference type="SMART" id="SM00316">
    <property type="entry name" value="S1"/>
    <property type="match status" value="1"/>
</dbReference>
<dbReference type="SUPFAM" id="SSF54791">
    <property type="entry name" value="Eukaryotic type KH-domain (KH-domain type I)"/>
    <property type="match status" value="1"/>
</dbReference>
<dbReference type="SUPFAM" id="SSF50249">
    <property type="entry name" value="Nucleic acid-binding proteins"/>
    <property type="match status" value="1"/>
</dbReference>
<dbReference type="SUPFAM" id="SSF46915">
    <property type="entry name" value="Polynucleotide phosphorylase/guanosine pentaphosphate synthase (PNPase/GPSI), domain 3"/>
    <property type="match status" value="1"/>
</dbReference>
<dbReference type="SUPFAM" id="SSF55666">
    <property type="entry name" value="Ribonuclease PH domain 2-like"/>
    <property type="match status" value="2"/>
</dbReference>
<dbReference type="SUPFAM" id="SSF54211">
    <property type="entry name" value="Ribosomal protein S5 domain 2-like"/>
    <property type="match status" value="2"/>
</dbReference>
<dbReference type="PROSITE" id="PS50084">
    <property type="entry name" value="KH_TYPE_1"/>
    <property type="match status" value="1"/>
</dbReference>
<dbReference type="PROSITE" id="PS50126">
    <property type="entry name" value="S1"/>
    <property type="match status" value="1"/>
</dbReference>
<reference key="1">
    <citation type="journal article" date="2005" name="Nucleic Acids Res.">
        <title>The genome sequence of Salmonella enterica serovar Choleraesuis, a highly invasive and resistant zoonotic pathogen.</title>
        <authorList>
            <person name="Chiu C.-H."/>
            <person name="Tang P."/>
            <person name="Chu C."/>
            <person name="Hu S."/>
            <person name="Bao Q."/>
            <person name="Yu J."/>
            <person name="Chou Y.-Y."/>
            <person name="Wang H.-S."/>
            <person name="Lee Y.-S."/>
        </authorList>
    </citation>
    <scope>NUCLEOTIDE SEQUENCE [LARGE SCALE GENOMIC DNA]</scope>
    <source>
        <strain>SC-B67</strain>
    </source>
</reference>
<feature type="chain" id="PRO_0000329830" description="Polyribonucleotide nucleotidyltransferase">
    <location>
        <begin position="1"/>
        <end position="711"/>
    </location>
</feature>
<feature type="domain" description="KH" evidence="1">
    <location>
        <begin position="553"/>
        <end position="612"/>
    </location>
</feature>
<feature type="domain" description="S1 motif" evidence="1">
    <location>
        <begin position="622"/>
        <end position="690"/>
    </location>
</feature>
<feature type="region of interest" description="Disordered" evidence="2">
    <location>
        <begin position="690"/>
        <end position="711"/>
    </location>
</feature>
<feature type="compositionally biased region" description="Low complexity" evidence="2">
    <location>
        <begin position="694"/>
        <end position="711"/>
    </location>
</feature>
<feature type="binding site" evidence="1">
    <location>
        <position position="486"/>
    </location>
    <ligand>
        <name>Mg(2+)</name>
        <dbReference type="ChEBI" id="CHEBI:18420"/>
    </ligand>
</feature>
<feature type="binding site" evidence="1">
    <location>
        <position position="492"/>
    </location>
    <ligand>
        <name>Mg(2+)</name>
        <dbReference type="ChEBI" id="CHEBI:18420"/>
    </ligand>
</feature>
<gene>
    <name evidence="1" type="primary">pnp</name>
    <name type="ordered locus">SCH_3223</name>
</gene>
<organism>
    <name type="scientific">Salmonella choleraesuis (strain SC-B67)</name>
    <dbReference type="NCBI Taxonomy" id="321314"/>
    <lineage>
        <taxon>Bacteria</taxon>
        <taxon>Pseudomonadati</taxon>
        <taxon>Pseudomonadota</taxon>
        <taxon>Gammaproteobacteria</taxon>
        <taxon>Enterobacterales</taxon>
        <taxon>Enterobacteriaceae</taxon>
        <taxon>Salmonella</taxon>
    </lineage>
</organism>
<name>PNP_SALCH</name>
<keyword id="KW-0963">Cytoplasm</keyword>
<keyword id="KW-0460">Magnesium</keyword>
<keyword id="KW-0479">Metal-binding</keyword>
<keyword id="KW-0548">Nucleotidyltransferase</keyword>
<keyword id="KW-0694">RNA-binding</keyword>
<keyword id="KW-0808">Transferase</keyword>